<feature type="chain" id="PRO_0000401481" description="Psoralen synthase">
    <location>
        <begin position="1" status="less than"/>
        <end position="473" status="greater than"/>
    </location>
</feature>
<feature type="transmembrane region" description="Helical" evidence="4">
    <location>
        <begin position="1"/>
        <end position="17"/>
    </location>
</feature>
<feature type="region of interest" description="Substrate specificity" evidence="1">
    <location>
        <begin position="350"/>
        <end position="355"/>
    </location>
</feature>
<feature type="binding site" description="axial binding residue" evidence="3">
    <location>
        <position position="425"/>
    </location>
    <ligand>
        <name>heme</name>
        <dbReference type="ChEBI" id="CHEBI:30413"/>
    </ligand>
    <ligandPart>
        <name>Fe</name>
        <dbReference type="ChEBI" id="CHEBI:18248"/>
    </ligandPart>
</feature>
<feature type="site" description="Substrate specificity" evidence="1">
    <location>
        <position position="109"/>
    </location>
</feature>
<feature type="site" description="Substrate specificity" evidence="1">
    <location>
        <position position="286"/>
    </location>
</feature>
<feature type="site" description="Substrate specificity" evidence="1">
    <location>
        <position position="290"/>
    </location>
</feature>
<feature type="non-terminal residue">
    <location>
        <position position="1"/>
    </location>
</feature>
<feature type="non-terminal residue">
    <location>
        <position position="473"/>
    </location>
</feature>
<reference key="1">
    <citation type="journal article" date="2009" name="J. Biol. Chem.">
        <title>Isolation and functional characterization of CYP71AJ4 encoding for the first P450 monooxygenase of angular furanocoumarin biosynthesis.</title>
        <authorList>
            <person name="Larbat R."/>
            <person name="Hehn A."/>
            <person name="Hans J."/>
            <person name="Schneider S."/>
            <person name="Jugde H."/>
            <person name="Schneider B."/>
            <person name="Matern U."/>
            <person name="Bourgaud F."/>
        </authorList>
    </citation>
    <scope>NUCLEOTIDE SEQUENCE [MRNA]</scope>
    <scope>FUNCTION</scope>
    <scope>CATALYTIC ACTIVITY</scope>
    <scope>BIOPHYSICOCHEMICAL PROPERTIES</scope>
    <source>
        <strain>cv. Demi-long de Guernesey</strain>
    </source>
</reference>
<reference key="2">
    <citation type="journal article" date="2018" name="Front. Plant Sci.">
        <title>The CYP71AZ P450 subfamily: A driving factor for the diversification of coumarin biosynthesis in apiaceous plants.</title>
        <authorList>
            <person name="Krieger C."/>
            <person name="Roselli S."/>
            <person name="Kellner-Thielmann S."/>
            <person name="Galati G."/>
            <person name="Schneider B."/>
            <person name="Grosjean J."/>
            <person name="Olry A."/>
            <person name="Ritchie D."/>
            <person name="Matern U."/>
            <person name="Bourgaud F."/>
            <person name="Hehn A."/>
        </authorList>
    </citation>
    <scope>FUNCTION</scope>
    <scope>REVIEW</scope>
    <scope>PATHWAY</scope>
    <scope>INDUCTION BY WOUNDING</scope>
    <source>
        <strain>cv. Demi-long de Guernesey</strain>
    </source>
</reference>
<keyword id="KW-0256">Endoplasmic reticulum</keyword>
<keyword id="KW-0349">Heme</keyword>
<keyword id="KW-0408">Iron</keyword>
<keyword id="KW-0472">Membrane</keyword>
<keyword id="KW-0479">Metal-binding</keyword>
<keyword id="KW-0492">Microsome</keyword>
<keyword id="KW-0503">Monooxygenase</keyword>
<keyword id="KW-0560">Oxidoreductase</keyword>
<keyword id="KW-0812">Transmembrane</keyword>
<keyword id="KW-1133">Transmembrane helix</keyword>
<name>C71AJ_PASSA</name>
<accession>C0SJS2</accession>
<evidence type="ECO:0000250" key="1">
    <source>
        <dbReference type="UniProtKB" id="A0A2Z5D850"/>
    </source>
</evidence>
<evidence type="ECO:0000250" key="2">
    <source>
        <dbReference type="UniProtKB" id="Q6QNI4"/>
    </source>
</evidence>
<evidence type="ECO:0000250" key="3">
    <source>
        <dbReference type="UniProtKB" id="Q94IP1"/>
    </source>
</evidence>
<evidence type="ECO:0000255" key="4"/>
<evidence type="ECO:0000269" key="5">
    <source>
    </source>
</evidence>
<evidence type="ECO:0000269" key="6">
    <source>
    </source>
</evidence>
<evidence type="ECO:0000303" key="7">
    <source>
    </source>
</evidence>
<evidence type="ECO:0000303" key="8">
    <source>
    </source>
</evidence>
<evidence type="ECO:0000305" key="9"/>
<evidence type="ECO:0000305" key="10">
    <source>
    </source>
</evidence>
<evidence type="ECO:0000305" key="11">
    <source>
    </source>
</evidence>
<sequence>YFFPLFLVTIFLYKWLVKKTPSKNLPPSPPRLPIIGNLHQIGPDPQISLRDLAREYGPVMHLKFGSVPVLVVSSADGAREIFKTHDLVFADRPYSSVANRIFYNGRDMVFARYTEYWRQVKSTCVTQLLSVKRVQSFHNVREEEVALLLDNIENSKSKVINLSEMLIELTGNVVCRAALGSGYNVDSYKSLLLQIMDMLGYSRSIEDFFPSLGWVDWITGLKGKVEKAANGVDAFLEGVLKNHTNPSTSSANKDFVSILLEIQEADAGSSMDKECIKSLIWDMLGAGTETIATALEWTIGALIKSPDAMSKLQKEVREIGKGKSRIEEGDLVKMDYLKAVMKESMRLYFTAPLLVPREARQDVKFMGYDIKSGTQVLINAWAIARDPSSWDNPEEFRPERFLNSPIDYKGFNYEYIPFGAGRRGCPGIQFAISVNELVVANVVNKFNFELPDGKRLEEMDMTASTGITFHKKS</sequence>
<comment type="function">
    <text evidence="5 8">Involved in the biosynthesis of coumarins and furanocoumarins (FCs), natural products required for defense responses against attacks by predators with potential medical and agroindustrial usages such as anticoagulant, rodenticide and artificial vanilla substitutes (PubMed:29971079). Involved in linear furanocumarin (psoralen) biosynthesis (PubMed:19098286). Converts marmesin to psoralen and, with much lower affinity, 5-hydroxymarmesin to bergaptol (PubMed:19098286).</text>
</comment>
<comment type="catalytic activity">
    <reaction evidence="5">
        <text>(7S)-marmesin + reduced [NADPH--hemoprotein reductase] + O2 = psoralen + acetone + oxidized [NADPH--hemoprotein reductase] + 2 H2O + H(+)</text>
        <dbReference type="Rhea" id="RHEA:19281"/>
        <dbReference type="Rhea" id="RHEA-COMP:11964"/>
        <dbReference type="Rhea" id="RHEA-COMP:11965"/>
        <dbReference type="ChEBI" id="CHEBI:6695"/>
        <dbReference type="ChEBI" id="CHEBI:15347"/>
        <dbReference type="ChEBI" id="CHEBI:15377"/>
        <dbReference type="ChEBI" id="CHEBI:15378"/>
        <dbReference type="ChEBI" id="CHEBI:15379"/>
        <dbReference type="ChEBI" id="CHEBI:27616"/>
        <dbReference type="ChEBI" id="CHEBI:57618"/>
        <dbReference type="ChEBI" id="CHEBI:58210"/>
        <dbReference type="EC" id="1.14.14.141"/>
    </reaction>
</comment>
<comment type="cofactor">
    <cofactor evidence="3">
        <name>heme</name>
        <dbReference type="ChEBI" id="CHEBI:30413"/>
    </cofactor>
</comment>
<comment type="biophysicochemical properties">
    <kinetics>
        <KM evidence="5">1.3 uM for marmesin</KM>
        <KM evidence="5">19 uM for 5-hydroxymarmesin</KM>
    </kinetics>
    <phDependence>
        <text evidence="5">Optimum pH is 7.5.</text>
    </phDependence>
</comment>
<comment type="pathway">
    <text evidence="11">Secondary metabolite biosynthesis.</text>
</comment>
<comment type="subcellular location">
    <subcellularLocation>
        <location evidence="2">Microsome membrane</location>
        <topology evidence="4">Single-pass membrane protein</topology>
    </subcellularLocation>
</comment>
<comment type="induction">
    <text evidence="6">Accumulates in roots after wounding.</text>
</comment>
<comment type="biotechnology">
    <text evidence="10">Psoralen possesses photocarcinogen properties. It intercalates in double-stranded DNA and cross-links pyrimidine bases under UV-A irradiation. Psoralen is widely used in combination with UV-A radiation to treat a variety of skin disorders like psoriasis or eczema.</text>
</comment>
<comment type="similarity">
    <text evidence="9">Belongs to the cytochrome P450 family.</text>
</comment>
<proteinExistence type="evidence at protein level"/>
<organism>
    <name type="scientific">Pastinaca sativa</name>
    <name type="common">Wild parsnip</name>
    <name type="synonym">Anethum pastinaca</name>
    <dbReference type="NCBI Taxonomy" id="4041"/>
    <lineage>
        <taxon>Eukaryota</taxon>
        <taxon>Viridiplantae</taxon>
        <taxon>Streptophyta</taxon>
        <taxon>Embryophyta</taxon>
        <taxon>Tracheophyta</taxon>
        <taxon>Spermatophyta</taxon>
        <taxon>Magnoliopsida</taxon>
        <taxon>eudicotyledons</taxon>
        <taxon>Gunneridae</taxon>
        <taxon>Pentapetalae</taxon>
        <taxon>asterids</taxon>
        <taxon>campanulids</taxon>
        <taxon>Apiales</taxon>
        <taxon>Apiaceae</taxon>
        <taxon>Apioideae</taxon>
        <taxon>apioid superclade</taxon>
        <taxon>Tordylieae</taxon>
        <taxon>Tordyliinae</taxon>
        <taxon>Pastinaca</taxon>
    </lineage>
</organism>
<dbReference type="EC" id="1.14.14.141" evidence="5"/>
<dbReference type="EMBL" id="EF191020">
    <property type="protein sequence ID" value="ABO84853.1"/>
    <property type="molecule type" value="mRNA"/>
</dbReference>
<dbReference type="SMR" id="C0SJS2"/>
<dbReference type="BRENDA" id="1.14.14.141">
    <property type="organism ID" value="4562"/>
</dbReference>
<dbReference type="SABIO-RK" id="C0SJS2"/>
<dbReference type="GO" id="GO:0005783">
    <property type="term" value="C:endoplasmic reticulum"/>
    <property type="evidence" value="ECO:0007669"/>
    <property type="project" value="UniProtKB-KW"/>
</dbReference>
<dbReference type="GO" id="GO:0016020">
    <property type="term" value="C:membrane"/>
    <property type="evidence" value="ECO:0007669"/>
    <property type="project" value="UniProtKB-KW"/>
</dbReference>
<dbReference type="GO" id="GO:0020037">
    <property type="term" value="F:heme binding"/>
    <property type="evidence" value="ECO:0007669"/>
    <property type="project" value="InterPro"/>
</dbReference>
<dbReference type="GO" id="GO:0005506">
    <property type="term" value="F:iron ion binding"/>
    <property type="evidence" value="ECO:0007669"/>
    <property type="project" value="InterPro"/>
</dbReference>
<dbReference type="GO" id="GO:0102876">
    <property type="term" value="F:psoralen synthase (NADPH) activity"/>
    <property type="evidence" value="ECO:0007669"/>
    <property type="project" value="UniProtKB-EC"/>
</dbReference>
<dbReference type="GO" id="GO:0009805">
    <property type="term" value="P:coumarin biosynthetic process"/>
    <property type="evidence" value="ECO:0000314"/>
    <property type="project" value="UniProtKB"/>
</dbReference>
<dbReference type="GO" id="GO:0009611">
    <property type="term" value="P:response to wounding"/>
    <property type="evidence" value="ECO:0000270"/>
    <property type="project" value="UniProtKB"/>
</dbReference>
<dbReference type="CDD" id="cd11072">
    <property type="entry name" value="CYP71-like"/>
    <property type="match status" value="1"/>
</dbReference>
<dbReference type="FunFam" id="1.10.630.10:FF:000011">
    <property type="entry name" value="Cytochrome P450 83B1"/>
    <property type="match status" value="1"/>
</dbReference>
<dbReference type="Gene3D" id="1.10.630.10">
    <property type="entry name" value="Cytochrome P450"/>
    <property type="match status" value="1"/>
</dbReference>
<dbReference type="InterPro" id="IPR001128">
    <property type="entry name" value="Cyt_P450"/>
</dbReference>
<dbReference type="InterPro" id="IPR017972">
    <property type="entry name" value="Cyt_P450_CS"/>
</dbReference>
<dbReference type="InterPro" id="IPR002401">
    <property type="entry name" value="Cyt_P450_E_grp-I"/>
</dbReference>
<dbReference type="InterPro" id="IPR036396">
    <property type="entry name" value="Cyt_P450_sf"/>
</dbReference>
<dbReference type="PANTHER" id="PTHR47955:SF15">
    <property type="entry name" value="CYTOCHROME P450 71A2-LIKE"/>
    <property type="match status" value="1"/>
</dbReference>
<dbReference type="PANTHER" id="PTHR47955">
    <property type="entry name" value="CYTOCHROME P450 FAMILY 71 PROTEIN"/>
    <property type="match status" value="1"/>
</dbReference>
<dbReference type="Pfam" id="PF00067">
    <property type="entry name" value="p450"/>
    <property type="match status" value="1"/>
</dbReference>
<dbReference type="PRINTS" id="PR00463">
    <property type="entry name" value="EP450I"/>
</dbReference>
<dbReference type="PRINTS" id="PR00385">
    <property type="entry name" value="P450"/>
</dbReference>
<dbReference type="SUPFAM" id="SSF48264">
    <property type="entry name" value="Cytochrome P450"/>
    <property type="match status" value="1"/>
</dbReference>
<dbReference type="PROSITE" id="PS00086">
    <property type="entry name" value="CYTOCHROME_P450"/>
    <property type="match status" value="1"/>
</dbReference>
<protein>
    <recommendedName>
        <fullName evidence="7">Psoralen synthase</fullName>
        <ecNumber evidence="5">1.14.14.141</ecNumber>
    </recommendedName>
    <alternativeName>
        <fullName evidence="7">Cytochrome P450 CYP71AJ3</fullName>
    </alternativeName>
</protein>
<gene>
    <name evidence="7" type="primary">CYP71AJ3</name>
</gene>